<accession>Q48GB5</accession>
<gene>
    <name evidence="1" type="primary">cynS</name>
    <name type="ordered locus">PSPPH_3410</name>
</gene>
<name>CYNS_PSE14</name>
<feature type="chain" id="PRO_1000051481" description="Cyanate hydratase">
    <location>
        <begin position="1"/>
        <end position="155"/>
    </location>
</feature>
<feature type="active site" evidence="1">
    <location>
        <position position="95"/>
    </location>
</feature>
<feature type="active site" evidence="1">
    <location>
        <position position="98"/>
    </location>
</feature>
<feature type="active site" evidence="1">
    <location>
        <position position="121"/>
    </location>
</feature>
<dbReference type="EC" id="4.2.1.104" evidence="1"/>
<dbReference type="EMBL" id="CP000058">
    <property type="protein sequence ID" value="AAZ32992.1"/>
    <property type="molecule type" value="Genomic_DNA"/>
</dbReference>
<dbReference type="RefSeq" id="WP_004658714.1">
    <property type="nucleotide sequence ID" value="NC_005773.3"/>
</dbReference>
<dbReference type="SMR" id="Q48GB5"/>
<dbReference type="GeneID" id="69860446"/>
<dbReference type="KEGG" id="psp:PSPPH_3410"/>
<dbReference type="eggNOG" id="COG1513">
    <property type="taxonomic scope" value="Bacteria"/>
</dbReference>
<dbReference type="HOGENOM" id="CLU_103452_1_1_6"/>
<dbReference type="Proteomes" id="UP000000551">
    <property type="component" value="Chromosome"/>
</dbReference>
<dbReference type="GO" id="GO:0008824">
    <property type="term" value="F:cyanate hydratase activity"/>
    <property type="evidence" value="ECO:0007669"/>
    <property type="project" value="UniProtKB-UniRule"/>
</dbReference>
<dbReference type="GO" id="GO:0003677">
    <property type="term" value="F:DNA binding"/>
    <property type="evidence" value="ECO:0007669"/>
    <property type="project" value="InterPro"/>
</dbReference>
<dbReference type="GO" id="GO:0009439">
    <property type="term" value="P:cyanate metabolic process"/>
    <property type="evidence" value="ECO:0007669"/>
    <property type="project" value="UniProtKB-UniRule"/>
</dbReference>
<dbReference type="CDD" id="cd00559">
    <property type="entry name" value="Cyanase_C"/>
    <property type="match status" value="1"/>
</dbReference>
<dbReference type="Gene3D" id="3.30.1160.10">
    <property type="entry name" value="Cyanate lyase, C-terminal domain"/>
    <property type="match status" value="1"/>
</dbReference>
<dbReference type="Gene3D" id="1.10.260.40">
    <property type="entry name" value="lambda repressor-like DNA-binding domains"/>
    <property type="match status" value="1"/>
</dbReference>
<dbReference type="HAMAP" id="MF_00535">
    <property type="entry name" value="Cyanate_hydrat"/>
    <property type="match status" value="1"/>
</dbReference>
<dbReference type="InterPro" id="IPR008076">
    <property type="entry name" value="Cyanase"/>
</dbReference>
<dbReference type="InterPro" id="IPR003712">
    <property type="entry name" value="Cyanate_lyase_C"/>
</dbReference>
<dbReference type="InterPro" id="IPR036581">
    <property type="entry name" value="Cyanate_lyase_C_sf"/>
</dbReference>
<dbReference type="InterPro" id="IPR048564">
    <property type="entry name" value="CYNS_N"/>
</dbReference>
<dbReference type="InterPro" id="IPR010982">
    <property type="entry name" value="Lambda_DNA-bd_dom_sf"/>
</dbReference>
<dbReference type="NCBIfam" id="TIGR00673">
    <property type="entry name" value="cynS"/>
    <property type="match status" value="1"/>
</dbReference>
<dbReference type="NCBIfam" id="NF002773">
    <property type="entry name" value="PRK02866.1"/>
    <property type="match status" value="1"/>
</dbReference>
<dbReference type="PANTHER" id="PTHR34186">
    <property type="entry name" value="CYANATE HYDRATASE"/>
    <property type="match status" value="1"/>
</dbReference>
<dbReference type="PANTHER" id="PTHR34186:SF2">
    <property type="entry name" value="CYANATE HYDRATASE"/>
    <property type="match status" value="1"/>
</dbReference>
<dbReference type="Pfam" id="PF02560">
    <property type="entry name" value="Cyanate_lyase"/>
    <property type="match status" value="1"/>
</dbReference>
<dbReference type="Pfam" id="PF21291">
    <property type="entry name" value="CYNS_N"/>
    <property type="match status" value="1"/>
</dbReference>
<dbReference type="PIRSF" id="PIRSF001263">
    <property type="entry name" value="Cyanate_hydratas"/>
    <property type="match status" value="1"/>
</dbReference>
<dbReference type="PRINTS" id="PR01693">
    <property type="entry name" value="CYANASE"/>
</dbReference>
<dbReference type="SMART" id="SM01116">
    <property type="entry name" value="Cyanate_lyase"/>
    <property type="match status" value="1"/>
</dbReference>
<dbReference type="SUPFAM" id="SSF55234">
    <property type="entry name" value="Cyanase C-terminal domain"/>
    <property type="match status" value="1"/>
</dbReference>
<dbReference type="SUPFAM" id="SSF47413">
    <property type="entry name" value="lambda repressor-like DNA-binding domains"/>
    <property type="match status" value="1"/>
</dbReference>
<evidence type="ECO:0000255" key="1">
    <source>
        <dbReference type="HAMAP-Rule" id="MF_00535"/>
    </source>
</evidence>
<reference key="1">
    <citation type="journal article" date="2005" name="J. Bacteriol.">
        <title>Whole-genome sequence analysis of Pseudomonas syringae pv. phaseolicola 1448A reveals divergence among pathovars in genes involved in virulence and transposition.</title>
        <authorList>
            <person name="Joardar V."/>
            <person name="Lindeberg M."/>
            <person name="Jackson R.W."/>
            <person name="Selengut J."/>
            <person name="Dodson R."/>
            <person name="Brinkac L.M."/>
            <person name="Daugherty S.C."/>
            <person name="DeBoy R.T."/>
            <person name="Durkin A.S."/>
            <person name="Gwinn Giglio M."/>
            <person name="Madupu R."/>
            <person name="Nelson W.C."/>
            <person name="Rosovitz M.J."/>
            <person name="Sullivan S.A."/>
            <person name="Crabtree J."/>
            <person name="Creasy T."/>
            <person name="Davidsen T.M."/>
            <person name="Haft D.H."/>
            <person name="Zafar N."/>
            <person name="Zhou L."/>
            <person name="Halpin R."/>
            <person name="Holley T."/>
            <person name="Khouri H.M."/>
            <person name="Feldblyum T.V."/>
            <person name="White O."/>
            <person name="Fraser C.M."/>
            <person name="Chatterjee A.K."/>
            <person name="Cartinhour S."/>
            <person name="Schneider D."/>
            <person name="Mansfield J.W."/>
            <person name="Collmer A."/>
            <person name="Buell R."/>
        </authorList>
    </citation>
    <scope>NUCLEOTIDE SEQUENCE [LARGE SCALE GENOMIC DNA]</scope>
    <source>
        <strain>1448A / Race 6</strain>
    </source>
</reference>
<proteinExistence type="inferred from homology"/>
<protein>
    <recommendedName>
        <fullName evidence="1">Cyanate hydratase</fullName>
        <shortName evidence="1">Cyanase</shortName>
        <ecNumber evidence="1">4.2.1.104</ecNumber>
    </recommendedName>
    <alternativeName>
        <fullName evidence="1">Cyanate hydrolase</fullName>
    </alternativeName>
    <alternativeName>
        <fullName evidence="1">Cyanate lyase</fullName>
    </alternativeName>
</protein>
<comment type="function">
    <text evidence="1">Catalyzes the reaction of cyanate with bicarbonate to produce ammonia and carbon dioxide.</text>
</comment>
<comment type="catalytic activity">
    <reaction evidence="1">
        <text>cyanate + hydrogencarbonate + 3 H(+) = NH4(+) + 2 CO2</text>
        <dbReference type="Rhea" id="RHEA:11120"/>
        <dbReference type="ChEBI" id="CHEBI:15378"/>
        <dbReference type="ChEBI" id="CHEBI:16526"/>
        <dbReference type="ChEBI" id="CHEBI:17544"/>
        <dbReference type="ChEBI" id="CHEBI:28938"/>
        <dbReference type="ChEBI" id="CHEBI:29195"/>
        <dbReference type="EC" id="4.2.1.104"/>
    </reaction>
</comment>
<comment type="similarity">
    <text evidence="1">Belongs to the cyanase family.</text>
</comment>
<keyword id="KW-0456">Lyase</keyword>
<sequence length="155" mass="16962">MPHSNISRAPRQNLTERVLQAKTAKNLTWAGLAEGTGLSVVYVTAALLGQHPLPEAVAEVVAERLGLDRDAVAELQTIPLRGNVEDVSSDPTIYRFHEMVQVYGTTLKALVHEQFGDGIISAINFKLDIKKVEDPEGGERAVITLDGKFLPYKPF</sequence>
<organism>
    <name type="scientific">Pseudomonas savastanoi pv. phaseolicola (strain 1448A / Race 6)</name>
    <name type="common">Pseudomonas syringae pv. phaseolicola (strain 1448A / Race 6)</name>
    <dbReference type="NCBI Taxonomy" id="264730"/>
    <lineage>
        <taxon>Bacteria</taxon>
        <taxon>Pseudomonadati</taxon>
        <taxon>Pseudomonadota</taxon>
        <taxon>Gammaproteobacteria</taxon>
        <taxon>Pseudomonadales</taxon>
        <taxon>Pseudomonadaceae</taxon>
        <taxon>Pseudomonas</taxon>
    </lineage>
</organism>